<reference key="1">
    <citation type="journal article" date="2009" name="J. Bacteriol.">
        <title>Complete genome sequence and comparative genome analysis of enteropathogenic Escherichia coli O127:H6 strain E2348/69.</title>
        <authorList>
            <person name="Iguchi A."/>
            <person name="Thomson N.R."/>
            <person name="Ogura Y."/>
            <person name="Saunders D."/>
            <person name="Ooka T."/>
            <person name="Henderson I.R."/>
            <person name="Harris D."/>
            <person name="Asadulghani M."/>
            <person name="Kurokawa K."/>
            <person name="Dean P."/>
            <person name="Kenny B."/>
            <person name="Quail M.A."/>
            <person name="Thurston S."/>
            <person name="Dougan G."/>
            <person name="Hayashi T."/>
            <person name="Parkhill J."/>
            <person name="Frankel G."/>
        </authorList>
    </citation>
    <scope>NUCLEOTIDE SEQUENCE [LARGE SCALE GENOMIC DNA]</scope>
    <source>
        <strain>E2348/69 / EPEC</strain>
    </source>
</reference>
<evidence type="ECO:0000255" key="1">
    <source>
        <dbReference type="HAMAP-Rule" id="MF_01085"/>
    </source>
</evidence>
<accession>B7URD0</accession>
<sequence>MTEPLKPRIDFDGPLDVDQNPKFRAQQTFDENQAQNFAPATLDEAPEEEGQVEAVMDAALRPKRSLWRKMVMGGLALFGASVVGQGVQWTMNAWQTQDWVALGGCAAGALIIGAGVGSVVTEWRRLWRLRQRAHERDEARDLLHSHGTGKGRAFCEKLAQQAGIDQSHPALQRWYASIHETQNDREVVSLYAHLVQPVLDAQARREISRSAAESTLMIAVSPLALVDMAFIAWRNLRLINRIATLYGIELGYYSRLRLFKLVLLNIAFAGASELVREVGMDWMSQDLAARLSTRAAQGIGAGLLTARLGIKAMELCRPLPWIDDDKPRLGDFRRQLIGQVKETLQKGKTPSEK</sequence>
<proteinExistence type="inferred from homology"/>
<protein>
    <recommendedName>
        <fullName evidence="1">UPF0283 membrane protein YcjF</fullName>
    </recommendedName>
</protein>
<dbReference type="EMBL" id="FM180568">
    <property type="protein sequence ID" value="CAS09063.1"/>
    <property type="molecule type" value="Genomic_DNA"/>
</dbReference>
<dbReference type="RefSeq" id="WP_000138697.1">
    <property type="nucleotide sequence ID" value="NC_011601.1"/>
</dbReference>
<dbReference type="SMR" id="B7URD0"/>
<dbReference type="KEGG" id="ecg:E2348C_1515"/>
<dbReference type="HOGENOM" id="CLU_057693_2_0_6"/>
<dbReference type="Proteomes" id="UP000008205">
    <property type="component" value="Chromosome"/>
</dbReference>
<dbReference type="GO" id="GO:0005886">
    <property type="term" value="C:plasma membrane"/>
    <property type="evidence" value="ECO:0007669"/>
    <property type="project" value="UniProtKB-SubCell"/>
</dbReference>
<dbReference type="HAMAP" id="MF_01085">
    <property type="entry name" value="UPF0283"/>
    <property type="match status" value="1"/>
</dbReference>
<dbReference type="InterPro" id="IPR021147">
    <property type="entry name" value="DUF697"/>
</dbReference>
<dbReference type="InterPro" id="IPR006507">
    <property type="entry name" value="UPF0283"/>
</dbReference>
<dbReference type="NCBIfam" id="TIGR01620">
    <property type="entry name" value="hyp_HI0043"/>
    <property type="match status" value="1"/>
</dbReference>
<dbReference type="PANTHER" id="PTHR39342">
    <property type="entry name" value="UPF0283 MEMBRANE PROTEIN YCJF"/>
    <property type="match status" value="1"/>
</dbReference>
<dbReference type="PANTHER" id="PTHR39342:SF1">
    <property type="entry name" value="UPF0283 MEMBRANE PROTEIN YCJF"/>
    <property type="match status" value="1"/>
</dbReference>
<dbReference type="Pfam" id="PF05128">
    <property type="entry name" value="DUF697"/>
    <property type="match status" value="1"/>
</dbReference>
<feature type="chain" id="PRO_1000149858" description="UPF0283 membrane protein YcjF">
    <location>
        <begin position="1"/>
        <end position="353"/>
    </location>
</feature>
<feature type="transmembrane region" description="Helical" evidence="1">
    <location>
        <begin position="70"/>
        <end position="90"/>
    </location>
</feature>
<feature type="transmembrane region" description="Helical" evidence="1">
    <location>
        <begin position="100"/>
        <end position="120"/>
    </location>
</feature>
<feature type="transmembrane region" description="Helical" evidence="1">
    <location>
        <begin position="213"/>
        <end position="233"/>
    </location>
</feature>
<keyword id="KW-0997">Cell inner membrane</keyword>
<keyword id="KW-1003">Cell membrane</keyword>
<keyword id="KW-0472">Membrane</keyword>
<keyword id="KW-1185">Reference proteome</keyword>
<keyword id="KW-0812">Transmembrane</keyword>
<keyword id="KW-1133">Transmembrane helix</keyword>
<organism>
    <name type="scientific">Escherichia coli O127:H6 (strain E2348/69 / EPEC)</name>
    <dbReference type="NCBI Taxonomy" id="574521"/>
    <lineage>
        <taxon>Bacteria</taxon>
        <taxon>Pseudomonadati</taxon>
        <taxon>Pseudomonadota</taxon>
        <taxon>Gammaproteobacteria</taxon>
        <taxon>Enterobacterales</taxon>
        <taxon>Enterobacteriaceae</taxon>
        <taxon>Escherichia</taxon>
    </lineage>
</organism>
<gene>
    <name evidence="1" type="primary">ycjF</name>
    <name type="ordered locus">E2348C_1515</name>
</gene>
<name>YCJF_ECO27</name>
<comment type="subcellular location">
    <subcellularLocation>
        <location evidence="1">Cell inner membrane</location>
        <topology evidence="1">Multi-pass membrane protein</topology>
    </subcellularLocation>
</comment>
<comment type="similarity">
    <text evidence="1">Belongs to the UPF0283 family.</text>
</comment>